<protein>
    <recommendedName>
        <fullName>Cytochrome b-c1 complex subunit 2, mitochondrial</fullName>
    </recommendedName>
    <alternativeName>
        <fullName>Complex III subunit 2</fullName>
    </alternativeName>
    <alternativeName>
        <fullName>Core protein II</fullName>
    </alternativeName>
    <alternativeName>
        <fullName>Ubiquinol-cytochrome-c reductase complex core protein 2</fullName>
    </alternativeName>
</protein>
<proteinExistence type="evidence at protein level"/>
<feature type="transit peptide" description="Mitochondrion" evidence="2">
    <location>
        <begin position="1"/>
        <end position="30"/>
    </location>
</feature>
<feature type="chain" id="PRO_0000026799" description="Cytochrome b-c1 complex subunit 2, mitochondrial">
    <location>
        <begin position="31"/>
        <end position="426"/>
    </location>
</feature>
<sequence>MKSFTRNLRRFQTPRRNLHGISYTPKKVEGVSFAGRETPTATGSLSVVINAGSRYQPDAGVSHLLEKFAFKTTEERSALRITRESELLGGQLSTQITREHIILTARFLNEYLEYYARLLAEVVDATKFLPFQLTEEVLPTARIESELFREDILRVAMAKLHEKAFHRGIGNEVYLPASASPSISEIKDFASKAYVKSNFSVISSGPDVQKASDLCAKYFAVIPDGSPLKSAPTKISSGESRVYSKGTNYFCLGFPAPAASPELFVLSSILGGDAAVKWSHGNTLLAKAAGTASEYKATAVADLTPYSDASLLSVVISGSCPKAIKATASESFKALKSLSSNIPNDVVKSGIAMAKTKYLSAFEPVTLNAISASSLVSASKGSDAFISGFDKVTPASISKVVSSLLAKPASTVAVGNLDVLPYYDEL</sequence>
<organism>
    <name type="scientific">Schizosaccharomyces pombe (strain 972 / ATCC 24843)</name>
    <name type="common">Fission yeast</name>
    <dbReference type="NCBI Taxonomy" id="284812"/>
    <lineage>
        <taxon>Eukaryota</taxon>
        <taxon>Fungi</taxon>
        <taxon>Dikarya</taxon>
        <taxon>Ascomycota</taxon>
        <taxon>Taphrinomycotina</taxon>
        <taxon>Schizosaccharomycetes</taxon>
        <taxon>Schizosaccharomycetales</taxon>
        <taxon>Schizosaccharomycetaceae</taxon>
        <taxon>Schizosaccharomyces</taxon>
    </lineage>
</organism>
<keyword id="KW-0002">3D-structure</keyword>
<keyword id="KW-0249">Electron transport</keyword>
<keyword id="KW-0472">Membrane</keyword>
<keyword id="KW-0496">Mitochondrion</keyword>
<keyword id="KW-0999">Mitochondrion inner membrane</keyword>
<keyword id="KW-1185">Reference proteome</keyword>
<keyword id="KW-0679">Respiratory chain</keyword>
<keyword id="KW-0809">Transit peptide</keyword>
<keyword id="KW-0813">Transport</keyword>
<accession>P78761</accession>
<reference key="1">
    <citation type="journal article" date="2002" name="Nature">
        <title>The genome sequence of Schizosaccharomyces pombe.</title>
        <authorList>
            <person name="Wood V."/>
            <person name="Gwilliam R."/>
            <person name="Rajandream M.A."/>
            <person name="Lyne M.H."/>
            <person name="Lyne R."/>
            <person name="Stewart A."/>
            <person name="Sgouros J.G."/>
            <person name="Peat N."/>
            <person name="Hayles J."/>
            <person name="Baker S.G."/>
            <person name="Basham D."/>
            <person name="Bowman S."/>
            <person name="Brooks K."/>
            <person name="Brown D."/>
            <person name="Brown S."/>
            <person name="Chillingworth T."/>
            <person name="Churcher C.M."/>
            <person name="Collins M."/>
            <person name="Connor R."/>
            <person name="Cronin A."/>
            <person name="Davis P."/>
            <person name="Feltwell T."/>
            <person name="Fraser A."/>
            <person name="Gentles S."/>
            <person name="Goble A."/>
            <person name="Hamlin N."/>
            <person name="Harris D.E."/>
            <person name="Hidalgo J."/>
            <person name="Hodgson G."/>
            <person name="Holroyd S."/>
            <person name="Hornsby T."/>
            <person name="Howarth S."/>
            <person name="Huckle E.J."/>
            <person name="Hunt S."/>
            <person name="Jagels K."/>
            <person name="James K.D."/>
            <person name="Jones L."/>
            <person name="Jones M."/>
            <person name="Leather S."/>
            <person name="McDonald S."/>
            <person name="McLean J."/>
            <person name="Mooney P."/>
            <person name="Moule S."/>
            <person name="Mungall K.L."/>
            <person name="Murphy L.D."/>
            <person name="Niblett D."/>
            <person name="Odell C."/>
            <person name="Oliver K."/>
            <person name="O'Neil S."/>
            <person name="Pearson D."/>
            <person name="Quail M.A."/>
            <person name="Rabbinowitsch E."/>
            <person name="Rutherford K.M."/>
            <person name="Rutter S."/>
            <person name="Saunders D."/>
            <person name="Seeger K."/>
            <person name="Sharp S."/>
            <person name="Skelton J."/>
            <person name="Simmonds M.N."/>
            <person name="Squares R."/>
            <person name="Squares S."/>
            <person name="Stevens K."/>
            <person name="Taylor K."/>
            <person name="Taylor R.G."/>
            <person name="Tivey A."/>
            <person name="Walsh S.V."/>
            <person name="Warren T."/>
            <person name="Whitehead S."/>
            <person name="Woodward J.R."/>
            <person name="Volckaert G."/>
            <person name="Aert R."/>
            <person name="Robben J."/>
            <person name="Grymonprez B."/>
            <person name="Weltjens I."/>
            <person name="Vanstreels E."/>
            <person name="Rieger M."/>
            <person name="Schaefer M."/>
            <person name="Mueller-Auer S."/>
            <person name="Gabel C."/>
            <person name="Fuchs M."/>
            <person name="Duesterhoeft A."/>
            <person name="Fritzc C."/>
            <person name="Holzer E."/>
            <person name="Moestl D."/>
            <person name="Hilbert H."/>
            <person name="Borzym K."/>
            <person name="Langer I."/>
            <person name="Beck A."/>
            <person name="Lehrach H."/>
            <person name="Reinhardt R."/>
            <person name="Pohl T.M."/>
            <person name="Eger P."/>
            <person name="Zimmermann W."/>
            <person name="Wedler H."/>
            <person name="Wambutt R."/>
            <person name="Purnelle B."/>
            <person name="Goffeau A."/>
            <person name="Cadieu E."/>
            <person name="Dreano S."/>
            <person name="Gloux S."/>
            <person name="Lelaure V."/>
            <person name="Mottier S."/>
            <person name="Galibert F."/>
            <person name="Aves S.J."/>
            <person name="Xiang Z."/>
            <person name="Hunt C."/>
            <person name="Moore K."/>
            <person name="Hurst S.M."/>
            <person name="Lucas M."/>
            <person name="Rochet M."/>
            <person name="Gaillardin C."/>
            <person name="Tallada V.A."/>
            <person name="Garzon A."/>
            <person name="Thode G."/>
            <person name="Daga R.R."/>
            <person name="Cruzado L."/>
            <person name="Jimenez J."/>
            <person name="Sanchez M."/>
            <person name="del Rey F."/>
            <person name="Benito J."/>
            <person name="Dominguez A."/>
            <person name="Revuelta J.L."/>
            <person name="Moreno S."/>
            <person name="Armstrong J."/>
            <person name="Forsburg S.L."/>
            <person name="Cerutti L."/>
            <person name="Lowe T."/>
            <person name="McCombie W.R."/>
            <person name="Paulsen I."/>
            <person name="Potashkin J."/>
            <person name="Shpakovski G.V."/>
            <person name="Ussery D."/>
            <person name="Barrell B.G."/>
            <person name="Nurse P."/>
        </authorList>
    </citation>
    <scope>NUCLEOTIDE SEQUENCE [LARGE SCALE GENOMIC DNA]</scope>
    <source>
        <strain>972 / ATCC 24843</strain>
    </source>
</reference>
<reference key="2">
    <citation type="journal article" date="1997" name="DNA Res.">
        <title>Identification of open reading frames in Schizosaccharomyces pombe cDNAs.</title>
        <authorList>
            <person name="Yoshioka S."/>
            <person name="Kato K."/>
            <person name="Nakai K."/>
            <person name="Okayama H."/>
            <person name="Nojima H."/>
        </authorList>
    </citation>
    <scope>NUCLEOTIDE SEQUENCE [LARGE SCALE MRNA] OF 71-426</scope>
    <source>
        <strain>PR745</strain>
    </source>
</reference>
<name>QCR2_SCHPO</name>
<evidence type="ECO:0000250" key="1">
    <source>
        <dbReference type="UniProtKB" id="P07257"/>
    </source>
</evidence>
<evidence type="ECO:0000255" key="2"/>
<evidence type="ECO:0000305" key="3"/>
<dbReference type="EMBL" id="CU329672">
    <property type="protein sequence ID" value="CAA21062.1"/>
    <property type="molecule type" value="Genomic_DNA"/>
</dbReference>
<dbReference type="EMBL" id="D89109">
    <property type="protein sequence ID" value="BAA13772.1"/>
    <property type="molecule type" value="mRNA"/>
</dbReference>
<dbReference type="PIR" id="T41476">
    <property type="entry name" value="T41476"/>
</dbReference>
<dbReference type="PIR" id="T42086">
    <property type="entry name" value="T42086"/>
</dbReference>
<dbReference type="RefSeq" id="NP_587698.1">
    <property type="nucleotide sequence ID" value="NM_001022693.2"/>
</dbReference>
<dbReference type="PDB" id="8Q1B">
    <property type="method" value="EM"/>
    <property type="resolution" value="3.40 A"/>
    <property type="chains" value="B/M=1-426"/>
</dbReference>
<dbReference type="PDBsum" id="8Q1B"/>
<dbReference type="EMDB" id="EMD-18062"/>
<dbReference type="SMR" id="P78761"/>
<dbReference type="BioGRID" id="275557">
    <property type="interactions" value="1"/>
</dbReference>
<dbReference type="ComplexPortal" id="CPX-9308">
    <property type="entry name" value="Mitochondrial respiratory chain complex III"/>
</dbReference>
<dbReference type="FunCoup" id="P78761">
    <property type="interactions" value="288"/>
</dbReference>
<dbReference type="STRING" id="284812.P78761"/>
<dbReference type="iPTMnet" id="P78761"/>
<dbReference type="PaxDb" id="4896-SPCC613.10.1"/>
<dbReference type="EnsemblFungi" id="SPCC613.10.1">
    <property type="protein sequence ID" value="SPCC613.10.1:pep"/>
    <property type="gene ID" value="SPCC613.10"/>
</dbReference>
<dbReference type="GeneID" id="2538983"/>
<dbReference type="KEGG" id="spo:2538983"/>
<dbReference type="PomBase" id="SPCC613.10">
    <property type="gene designation" value="qcr2"/>
</dbReference>
<dbReference type="VEuPathDB" id="FungiDB:SPCC613.10"/>
<dbReference type="eggNOG" id="KOG2583">
    <property type="taxonomic scope" value="Eukaryota"/>
</dbReference>
<dbReference type="HOGENOM" id="CLU_009902_0_1_1"/>
<dbReference type="InParanoid" id="P78761"/>
<dbReference type="OMA" id="APKFALY"/>
<dbReference type="PhylomeDB" id="P78761"/>
<dbReference type="PRO" id="PR:P78761"/>
<dbReference type="Proteomes" id="UP000002485">
    <property type="component" value="Chromosome III"/>
</dbReference>
<dbReference type="GO" id="GO:0005743">
    <property type="term" value="C:mitochondrial inner membrane"/>
    <property type="evidence" value="ECO:0000305"/>
    <property type="project" value="PomBase"/>
</dbReference>
<dbReference type="GO" id="GO:0005739">
    <property type="term" value="C:mitochondrion"/>
    <property type="evidence" value="ECO:0007005"/>
    <property type="project" value="PomBase"/>
</dbReference>
<dbReference type="GO" id="GO:0045275">
    <property type="term" value="C:respiratory chain complex III"/>
    <property type="evidence" value="ECO:0000250"/>
    <property type="project" value="PomBase"/>
</dbReference>
<dbReference type="GO" id="GO:0046872">
    <property type="term" value="F:metal ion binding"/>
    <property type="evidence" value="ECO:0007669"/>
    <property type="project" value="InterPro"/>
</dbReference>
<dbReference type="GO" id="GO:0005198">
    <property type="term" value="F:structural molecule activity"/>
    <property type="evidence" value="ECO:0000250"/>
    <property type="project" value="PomBase"/>
</dbReference>
<dbReference type="GO" id="GO:0006122">
    <property type="term" value="P:mitochondrial electron transport, ubiquinol to cytochrome c"/>
    <property type="evidence" value="ECO:0000250"/>
    <property type="project" value="PomBase"/>
</dbReference>
<dbReference type="GO" id="GO:1902600">
    <property type="term" value="P:proton transmembrane transport"/>
    <property type="evidence" value="ECO:0007669"/>
    <property type="project" value="GOC"/>
</dbReference>
<dbReference type="FunFam" id="3.30.830.10:FF:000021">
    <property type="entry name" value="Cytochrome b-c1 complex subunit 2"/>
    <property type="match status" value="1"/>
</dbReference>
<dbReference type="FunFam" id="3.30.830.10:FF:000039">
    <property type="entry name" value="Ubiquinol-cytochrome c reductase core subunit 2"/>
    <property type="match status" value="1"/>
</dbReference>
<dbReference type="Gene3D" id="3.30.830.10">
    <property type="entry name" value="Metalloenzyme, LuxS/M16 peptidase-like"/>
    <property type="match status" value="2"/>
</dbReference>
<dbReference type="InterPro" id="IPR011249">
    <property type="entry name" value="Metalloenz_LuxS/M16"/>
</dbReference>
<dbReference type="InterPro" id="IPR050361">
    <property type="entry name" value="MPP/UQCRC_Complex"/>
</dbReference>
<dbReference type="InterPro" id="IPR011765">
    <property type="entry name" value="Pept_M16_N"/>
</dbReference>
<dbReference type="InterPro" id="IPR007863">
    <property type="entry name" value="Peptidase_M16_C"/>
</dbReference>
<dbReference type="PANTHER" id="PTHR11851:SF209">
    <property type="entry name" value="CYTOCHROME B-C1 COMPLEX SUBUNIT 2, MITOCHONDRIAL"/>
    <property type="match status" value="1"/>
</dbReference>
<dbReference type="PANTHER" id="PTHR11851">
    <property type="entry name" value="METALLOPROTEASE"/>
    <property type="match status" value="1"/>
</dbReference>
<dbReference type="Pfam" id="PF00675">
    <property type="entry name" value="Peptidase_M16"/>
    <property type="match status" value="1"/>
</dbReference>
<dbReference type="Pfam" id="PF05193">
    <property type="entry name" value="Peptidase_M16_C"/>
    <property type="match status" value="1"/>
</dbReference>
<dbReference type="SUPFAM" id="SSF63411">
    <property type="entry name" value="LuxS/MPP-like metallohydrolase"/>
    <property type="match status" value="2"/>
</dbReference>
<gene>
    <name type="primary">qcr2</name>
    <name type="ORF">SPCC613.10</name>
</gene>
<comment type="function">
    <text evidence="1">Component of the ubiquinol-cytochrome c oxidoreductase, a multisubunit transmembrane complex that is part of the mitochondrial electron transport chain which drives oxidative phosphorylation. The respiratory chain contains 3 multisubunit complexes succinate dehydrogenase (complex II, CII), ubiquinol-cytochrome c oxidoreductase (cytochrome b-c1 complex, complex III, CIII) and cytochrome c oxidase (complex IV, CIV), that cooperate to transfer electrons derived from NADH and succinate to molecular oxygen, creating an electrochemical gradient over the inner membrane that drives transmembrane transport and the ATP synthase. The cytochrome b-c1 complex catalyzes electron transfer from ubiquinol to cytochrome c, linking this redox reaction to translocation of protons across the mitochondrial inner membrane, with protons being carried across the membrane as hydrogens on the quinol. In the process called Q cycle, 2 protons are consumed from the matrix, 4 protons are released into the intermembrane space and 2 electrons are passed to cytochrome c.</text>
</comment>
<comment type="subunit">
    <text evidence="1">Component of the ubiquinol-cytochrome c oxidoreductase (cytochrome b-c1 complex, complex III, CIII), a multisubunit enzyme composed of 3 respiratory subunits cytochrome b, cytochrome c1 and Rieske protein, 2 core protein subunits, and additional low-molecular weight protein subunits. The complex exists as an obligatory dimer and forms supercomplexes (SCs) in the inner mitochondrial membrane with cytochrome c oxidase (complex IV, CIV).</text>
</comment>
<comment type="subcellular location">
    <subcellularLocation>
        <location evidence="1">Mitochondrion inner membrane</location>
        <topology evidence="1">Peripheral membrane protein</topology>
        <orientation evidence="1">Matrix side</orientation>
    </subcellularLocation>
</comment>
<comment type="similarity">
    <text evidence="3">Belongs to the peptidase M16 family. UQCRC2/QCR2 subfamily.</text>
</comment>
<comment type="caution">
    <text evidence="3">Does not seem to have protease activity as it lacks the zinc-binding site.</text>
</comment>